<organism>
    <name type="scientific">Ralstonia nicotianae (strain ATCC BAA-1114 / GMI1000)</name>
    <name type="common">Ralstonia solanacearum</name>
    <dbReference type="NCBI Taxonomy" id="267608"/>
    <lineage>
        <taxon>Bacteria</taxon>
        <taxon>Pseudomonadati</taxon>
        <taxon>Pseudomonadota</taxon>
        <taxon>Betaproteobacteria</taxon>
        <taxon>Burkholderiales</taxon>
        <taxon>Burkholderiaceae</taxon>
        <taxon>Ralstonia</taxon>
        <taxon>Ralstonia solanacearum species complex</taxon>
    </lineage>
</organism>
<comment type="function">
    <text evidence="1">Site-specific tyrosine recombinase, which acts by catalyzing the cutting and rejoining of the recombining DNA molecules.</text>
</comment>
<comment type="subcellular location">
    <subcellularLocation>
        <location evidence="4">Cytoplasm</location>
    </subcellularLocation>
</comment>
<comment type="similarity">
    <text evidence="4">Belongs to the 'phage' integrase family.</text>
</comment>
<keyword id="KW-0131">Cell cycle</keyword>
<keyword id="KW-0132">Cell division</keyword>
<keyword id="KW-0159">Chromosome partition</keyword>
<keyword id="KW-0963">Cytoplasm</keyword>
<keyword id="KW-0229">DNA integration</keyword>
<keyword id="KW-0233">DNA recombination</keyword>
<keyword id="KW-0238">DNA-binding</keyword>
<keyword id="KW-0614">Plasmid</keyword>
<keyword id="KW-1185">Reference proteome</keyword>
<gene>
    <name evidence="5" type="primary">xerC2</name>
    <name type="ordered locus">RSp0090</name>
    <name type="ORF">RS05531</name>
</gene>
<evidence type="ECO:0000250" key="1">
    <source>
        <dbReference type="UniProtKB" id="P0A8P8"/>
    </source>
</evidence>
<evidence type="ECO:0000255" key="2">
    <source>
        <dbReference type="PROSITE-ProRule" id="PRU01246"/>
    </source>
</evidence>
<evidence type="ECO:0000255" key="3">
    <source>
        <dbReference type="PROSITE-ProRule" id="PRU01248"/>
    </source>
</evidence>
<evidence type="ECO:0000305" key="4"/>
<evidence type="ECO:0000312" key="5">
    <source>
        <dbReference type="EMBL" id="CAD17241.1"/>
    </source>
</evidence>
<feature type="chain" id="PRO_0000095319" description="Tyrosine recombinase XerC 2">
    <location>
        <begin position="1"/>
        <end position="347"/>
    </location>
</feature>
<feature type="domain" description="Core-binding (CB)" evidence="3">
    <location>
        <begin position="17"/>
        <end position="108"/>
    </location>
</feature>
<feature type="domain" description="Tyr recombinase" evidence="2">
    <location>
        <begin position="125"/>
        <end position="313"/>
    </location>
</feature>
<feature type="active site" evidence="2">
    <location>
        <position position="170"/>
    </location>
</feature>
<feature type="active site" evidence="2">
    <location>
        <position position="195"/>
    </location>
</feature>
<feature type="active site" evidence="2">
    <location>
        <position position="265"/>
    </location>
</feature>
<feature type="active site" evidence="2">
    <location>
        <position position="268"/>
    </location>
</feature>
<feature type="active site" evidence="2">
    <location>
        <position position="291"/>
    </location>
</feature>
<feature type="active site" description="O-(3'-phospho-DNA)-tyrosine intermediate" evidence="2">
    <location>
        <position position="300"/>
    </location>
</feature>
<protein>
    <recommendedName>
        <fullName evidence="4">Tyrosine recombinase XerC 2</fullName>
    </recommendedName>
</protein>
<reference key="1">
    <citation type="journal article" date="2002" name="Nature">
        <title>Genome sequence of the plant pathogen Ralstonia solanacearum.</title>
        <authorList>
            <person name="Salanoubat M."/>
            <person name="Genin S."/>
            <person name="Artiguenave F."/>
            <person name="Gouzy J."/>
            <person name="Mangenot S."/>
            <person name="Arlat M."/>
            <person name="Billault A."/>
            <person name="Brottier P."/>
            <person name="Camus J.-C."/>
            <person name="Cattolico L."/>
            <person name="Chandler M."/>
            <person name="Choisne N."/>
            <person name="Claudel-Renard C."/>
            <person name="Cunnac S."/>
            <person name="Demange N."/>
            <person name="Gaspin C."/>
            <person name="Lavie M."/>
            <person name="Moisan A."/>
            <person name="Robert C."/>
            <person name="Saurin W."/>
            <person name="Schiex T."/>
            <person name="Siguier P."/>
            <person name="Thebault P."/>
            <person name="Whalen M."/>
            <person name="Wincker P."/>
            <person name="Levy M."/>
            <person name="Weissenbach J."/>
            <person name="Boucher C.A."/>
        </authorList>
    </citation>
    <scope>NUCLEOTIDE SEQUENCE [LARGE SCALE GENOMIC DNA]</scope>
    <source>
        <strain>ATCC BAA-1114 / GMI1000</strain>
    </source>
</reference>
<dbReference type="EMBL" id="AL646053">
    <property type="protein sequence ID" value="CAD17241.1"/>
    <property type="molecule type" value="Genomic_DNA"/>
</dbReference>
<dbReference type="SMR" id="Q8XTL6"/>
<dbReference type="STRING" id="267608.RSp0090"/>
<dbReference type="EnsemblBacteria" id="CAD17241">
    <property type="protein sequence ID" value="CAD17241"/>
    <property type="gene ID" value="RSp0090"/>
</dbReference>
<dbReference type="KEGG" id="rso:RSp0090"/>
<dbReference type="eggNOG" id="COG4974">
    <property type="taxonomic scope" value="Bacteria"/>
</dbReference>
<dbReference type="HOGENOM" id="CLU_027562_9_0_4"/>
<dbReference type="Proteomes" id="UP000001436">
    <property type="component" value="Plasmid megaplasmid Rsp"/>
</dbReference>
<dbReference type="GO" id="GO:0005737">
    <property type="term" value="C:cytoplasm"/>
    <property type="evidence" value="ECO:0007669"/>
    <property type="project" value="UniProtKB-SubCell"/>
</dbReference>
<dbReference type="GO" id="GO:0003677">
    <property type="term" value="F:DNA binding"/>
    <property type="evidence" value="ECO:0007669"/>
    <property type="project" value="UniProtKB-KW"/>
</dbReference>
<dbReference type="GO" id="GO:0051301">
    <property type="term" value="P:cell division"/>
    <property type="evidence" value="ECO:0007669"/>
    <property type="project" value="UniProtKB-KW"/>
</dbReference>
<dbReference type="GO" id="GO:0007059">
    <property type="term" value="P:chromosome segregation"/>
    <property type="evidence" value="ECO:0007669"/>
    <property type="project" value="UniProtKB-KW"/>
</dbReference>
<dbReference type="GO" id="GO:0015074">
    <property type="term" value="P:DNA integration"/>
    <property type="evidence" value="ECO:0007669"/>
    <property type="project" value="UniProtKB-KW"/>
</dbReference>
<dbReference type="GO" id="GO:0006310">
    <property type="term" value="P:DNA recombination"/>
    <property type="evidence" value="ECO:0007669"/>
    <property type="project" value="UniProtKB-KW"/>
</dbReference>
<dbReference type="CDD" id="cd00798">
    <property type="entry name" value="INT_XerDC_C"/>
    <property type="match status" value="1"/>
</dbReference>
<dbReference type="Gene3D" id="1.10.150.130">
    <property type="match status" value="1"/>
</dbReference>
<dbReference type="Gene3D" id="1.10.443.10">
    <property type="entry name" value="Intergrase catalytic core"/>
    <property type="match status" value="1"/>
</dbReference>
<dbReference type="InterPro" id="IPR044068">
    <property type="entry name" value="CB"/>
</dbReference>
<dbReference type="InterPro" id="IPR011010">
    <property type="entry name" value="DNA_brk_join_enz"/>
</dbReference>
<dbReference type="InterPro" id="IPR013762">
    <property type="entry name" value="Integrase-like_cat_sf"/>
</dbReference>
<dbReference type="InterPro" id="IPR002104">
    <property type="entry name" value="Integrase_catalytic"/>
</dbReference>
<dbReference type="InterPro" id="IPR010998">
    <property type="entry name" value="Integrase_recombinase_N"/>
</dbReference>
<dbReference type="InterPro" id="IPR004107">
    <property type="entry name" value="Integrase_SAM-like_N"/>
</dbReference>
<dbReference type="InterPro" id="IPR050090">
    <property type="entry name" value="Tyrosine_recombinase_XerCD"/>
</dbReference>
<dbReference type="NCBIfam" id="NF002331">
    <property type="entry name" value="PRK01287.1"/>
    <property type="match status" value="1"/>
</dbReference>
<dbReference type="PANTHER" id="PTHR30349">
    <property type="entry name" value="PHAGE INTEGRASE-RELATED"/>
    <property type="match status" value="1"/>
</dbReference>
<dbReference type="PANTHER" id="PTHR30349:SF81">
    <property type="entry name" value="TYROSINE RECOMBINASE XERC"/>
    <property type="match status" value="1"/>
</dbReference>
<dbReference type="Pfam" id="PF13495">
    <property type="entry name" value="Phage_int_SAM_4"/>
    <property type="match status" value="1"/>
</dbReference>
<dbReference type="Pfam" id="PF00589">
    <property type="entry name" value="Phage_integrase"/>
    <property type="match status" value="1"/>
</dbReference>
<dbReference type="SUPFAM" id="SSF56349">
    <property type="entry name" value="DNA breaking-rejoining enzymes"/>
    <property type="match status" value="1"/>
</dbReference>
<dbReference type="PROSITE" id="PS51900">
    <property type="entry name" value="CB"/>
    <property type="match status" value="1"/>
</dbReference>
<dbReference type="PROSITE" id="PS51898">
    <property type="entry name" value="TYR_RECOMBINASE"/>
    <property type="match status" value="1"/>
</dbReference>
<sequence length="347" mass="38989">MKPAGPRKRAVDPLAHLVLTRYMEAHFEALLVTGYSADTVRARRISIRRFIVWCEERGIAQPADVTRAVLERYQRHLFYYRKPNGAPLTLGSQHGALAPLKTWFKWLARENHILYNPASELDLPKLPKHLPRAILSVQEVEAILAEADPATPYGLRDRAMLELLYSTGIRRMEVAGLALYDVDATRRLAFVRDGKGAKDRVVPVGVRALAWLDRYLLEARPQLIVAEREALFVTDYGEPVSPEYVASRVKRYMEFAGIQKPGATHLLRHAMATHMLEAGADVRVLQALLGHAQLNTTEIYTHVSIEHLRAIHDATHPARLQREDVLAADATDAARQALADALDRDEG</sequence>
<accession>Q8XTL6</accession>
<name>XERC2_RALN1</name>
<proteinExistence type="inferred from homology"/>
<geneLocation type="plasmid">
    <name>megaplasmid Rsp</name>
</geneLocation>